<accession>Q91082</accession>
<protein>
    <recommendedName>
        <fullName>Pro-opiomelanocortin</fullName>
        <shortName>POMC</shortName>
    </recommendedName>
    <alternativeName>
        <fullName>Corticotropin-lipotropin</fullName>
    </alternativeName>
    <component>
        <recommendedName>
            <fullName>NPP</fullName>
        </recommendedName>
    </component>
    <component>
        <recommendedName>
            <fullName>Gamma-melanotropin-like segment</fullName>
        </recommendedName>
    </component>
    <component>
        <recommendedName>
            <fullName>Corticotropin</fullName>
        </recommendedName>
        <alternativeName>
            <fullName>Adrenocorticotropic hormone</fullName>
            <shortName>ACTH</shortName>
        </alternativeName>
    </component>
    <component>
        <recommendedName>
            <fullName>Melanocyte-stimulating hormone alpha</fullName>
            <shortName>Alpha-MSH</shortName>
        </recommendedName>
        <alternativeName>
            <fullName>Melanotropin alpha</fullName>
        </alternativeName>
    </component>
    <component>
        <recommendedName>
            <fullName>Corticotropin-like intermediary peptide</fullName>
            <shortName>CLIP</shortName>
        </recommendedName>
    </component>
    <component>
        <recommendedName>
            <fullName>Melanocyte-stimulating hormone beta</fullName>
            <shortName>Beta-MSH</shortName>
        </recommendedName>
        <alternativeName>
            <fullName>Melanotropin beta</fullName>
        </alternativeName>
    </component>
    <component>
        <recommendedName>
            <fullName>Beta-endorphin</fullName>
        </recommendedName>
    </component>
    <component>
        <recommendedName>
            <fullName>Met-enkephalin</fullName>
        </recommendedName>
    </component>
</protein>
<proteinExistence type="evidence at transcript level"/>
<gene>
    <name type="primary">pomc</name>
</gene>
<keyword id="KW-0027">Amidation</keyword>
<keyword id="KW-0165">Cleavage on pair of basic residues</keyword>
<keyword id="KW-1015">Disulfide bond</keyword>
<keyword id="KW-0257">Endorphin</keyword>
<keyword id="KW-0372">Hormone</keyword>
<keyword id="KW-0873">Pyrrolidone carboxylic acid</keyword>
<keyword id="KW-0964">Secreted</keyword>
<keyword id="KW-0732">Signal</keyword>
<dbReference type="EMBL" id="U59910">
    <property type="protein sequence ID" value="AAB03227.1"/>
    <property type="molecule type" value="mRNA"/>
</dbReference>
<dbReference type="SMR" id="Q91082"/>
<dbReference type="GO" id="GO:0005576">
    <property type="term" value="C:extracellular region"/>
    <property type="evidence" value="ECO:0007669"/>
    <property type="project" value="UniProtKB-SubCell"/>
</dbReference>
<dbReference type="GO" id="GO:0005179">
    <property type="term" value="F:hormone activity"/>
    <property type="evidence" value="ECO:0007669"/>
    <property type="project" value="UniProtKB-KW"/>
</dbReference>
<dbReference type="GO" id="GO:0007218">
    <property type="term" value="P:neuropeptide signaling pathway"/>
    <property type="evidence" value="ECO:0007669"/>
    <property type="project" value="UniProtKB-KW"/>
</dbReference>
<dbReference type="InterPro" id="IPR013531">
    <property type="entry name" value="Mcrtin_ACTH_cent"/>
</dbReference>
<dbReference type="InterPro" id="IPR013593">
    <property type="entry name" value="Melanocortin_N"/>
</dbReference>
<dbReference type="InterPro" id="IPR013532">
    <property type="entry name" value="Opioid_neuropept"/>
</dbReference>
<dbReference type="InterPro" id="IPR001941">
    <property type="entry name" value="PMOC"/>
</dbReference>
<dbReference type="InterPro" id="IPR050878">
    <property type="entry name" value="POMC-derived_peptides"/>
</dbReference>
<dbReference type="PANTHER" id="PTHR11416">
    <property type="entry name" value="PRO-OPIOMELANOCORTIN"/>
    <property type="match status" value="1"/>
</dbReference>
<dbReference type="PANTHER" id="PTHR11416:SF7">
    <property type="entry name" value="PRO-OPIOMELANOCORTIN"/>
    <property type="match status" value="1"/>
</dbReference>
<dbReference type="Pfam" id="PF00976">
    <property type="entry name" value="ACTH_domain"/>
    <property type="match status" value="2"/>
</dbReference>
<dbReference type="Pfam" id="PF08384">
    <property type="entry name" value="NPP"/>
    <property type="match status" value="1"/>
</dbReference>
<dbReference type="Pfam" id="PF08035">
    <property type="entry name" value="Op_neuropeptide"/>
    <property type="match status" value="1"/>
</dbReference>
<dbReference type="PRINTS" id="PR00383">
    <property type="entry name" value="MELANOCORTIN"/>
</dbReference>
<dbReference type="SMART" id="SM01363">
    <property type="entry name" value="ACTH_domain"/>
    <property type="match status" value="2"/>
</dbReference>
<dbReference type="SMART" id="SM01364">
    <property type="entry name" value="NPP"/>
    <property type="match status" value="1"/>
</dbReference>
<dbReference type="SMART" id="SM01365">
    <property type="entry name" value="Op_neuropeptide"/>
    <property type="match status" value="1"/>
</dbReference>
<evidence type="ECO:0000250" key="1"/>
<evidence type="ECO:0000250" key="2">
    <source>
        <dbReference type="UniProtKB" id="P01193"/>
    </source>
</evidence>
<evidence type="ECO:0000255" key="3"/>
<evidence type="ECO:0000256" key="4">
    <source>
        <dbReference type="SAM" id="MobiDB-lite"/>
    </source>
</evidence>
<evidence type="ECO:0000305" key="5"/>
<name>COLI_LEPOS</name>
<feature type="signal peptide" evidence="3">
    <location>
        <begin position="1"/>
        <end position="22"/>
    </location>
</feature>
<feature type="peptide" id="PRO_0000025075" description="NPP" evidence="1">
    <location>
        <begin position="23"/>
        <end position="132"/>
    </location>
</feature>
<feature type="peptide" id="PRO_0000025076" description="Gamma-melanotropin-like segment">
    <location>
        <begin position="72"/>
        <end position="94"/>
    </location>
</feature>
<feature type="peptide" id="PRO_0000025077" description="Corticotropin" evidence="1">
    <location>
        <begin position="135"/>
        <end position="173"/>
    </location>
</feature>
<feature type="peptide" id="PRO_0000025078" description="Melanocyte-stimulating hormone alpha" evidence="1">
    <location>
        <begin position="135"/>
        <end position="147"/>
    </location>
</feature>
<feature type="peptide" id="PRO_0000025079" description="Corticotropin-like intermediary peptide" evidence="1">
    <location>
        <begin position="153"/>
        <end position="204"/>
    </location>
</feature>
<feature type="peptide" id="PRO_0000025080" description="Melanocyte-stimulating hormone beta" evidence="1">
    <location>
        <begin position="207"/>
        <end position="223"/>
    </location>
</feature>
<feature type="peptide" id="PRO_0000025081" description="Beta-endorphin">
    <location>
        <begin position="226"/>
        <end position="259"/>
    </location>
</feature>
<feature type="peptide" id="PRO_0000025082" description="Met-enkephalin" evidence="1">
    <location>
        <begin position="226"/>
        <end position="230"/>
    </location>
</feature>
<feature type="region of interest" description="Disordered" evidence="4">
    <location>
        <begin position="113"/>
        <end position="142"/>
    </location>
</feature>
<feature type="compositionally biased region" description="Basic and acidic residues" evidence="4">
    <location>
        <begin position="128"/>
        <end position="142"/>
    </location>
</feature>
<feature type="modified residue" description="Pyrrolidone carboxylic acid" evidence="1">
    <location>
        <position position="23"/>
    </location>
</feature>
<feature type="modified residue" description="Valine amide" evidence="1">
    <location>
        <position position="147"/>
    </location>
</feature>
<feature type="disulfide bond" evidence="1">
    <location>
        <begin position="24"/>
        <end position="46"/>
    </location>
</feature>
<feature type="disulfide bond" evidence="1">
    <location>
        <begin position="30"/>
        <end position="42"/>
    </location>
</feature>
<comment type="function">
    <molecule>Corticotropin</molecule>
    <text>Stimulates the adrenal glands to release cortisol.</text>
</comment>
<comment type="function">
    <molecule>Melanocyte-stimulating hormone alpha</molecule>
    <text>Anorexigenic peptide. Increases the pigmentation of skin by increasing melanin production in melanocytes.</text>
</comment>
<comment type="function">
    <molecule>Melanocyte-stimulating hormone beta</molecule>
    <text>Increases the pigmentation of skin by increasing melanin production in melanocytes.</text>
</comment>
<comment type="function">
    <molecule>Beta-endorphin</molecule>
    <text>Endogenous orexigenic opiate.</text>
</comment>
<comment type="function">
    <molecule>Met-enkephalin</molecule>
    <text>Endogenous opiate.</text>
</comment>
<comment type="subcellular location">
    <subcellularLocation>
        <location evidence="2">Secreted</location>
    </subcellularLocation>
    <text evidence="2">Melanocyte-stimulating hormone alpha and beta-endorphin are stored in separate granules in hypothalamic POMC neurons, suggesting that secretion may be under the control of different regulatory mechanisms.</text>
</comment>
<comment type="PTM">
    <text>Specific enzymatic cleavages at paired basic residues yield the different active peptides.</text>
</comment>
<comment type="similarity">
    <text evidence="5">Belongs to the POMC family.</text>
</comment>
<sequence length="259" mass="29675">MLRSVWVYSLGLAVLLQQSGREQCWEHSQCRDLSSEENILECIQACNSDLTAESPIFPGNGHLQPPSEADRNYAKSHFRSTALGRRTNGSVGSSKQAGENAALSILFAALAPPQAEEEMEESESSQQQRREDKRSYSMEHFRWGKPVGRKRRPVKVYPNGVEEESAEAYPTEMRRDLMSDLDYPLLEEVEEELGGENEVLNLQEKKDGSYKMHHFRWSRPPKDKRYGGFMKSWDERSQKPLLTLFKNVIIKDGHQKKGQ</sequence>
<reference key="1">
    <citation type="journal article" date="1997" name="Gen. Comp. Endocrinol.">
        <title>Deciphering posttranslational processing events in the pituitary of a neopterygian fish: cloning of a gar proopiomelanocortin cDNA.</title>
        <authorList>
            <person name="Dores R.M."/>
            <person name="Smith T.R."/>
            <person name="Rubin D.A."/>
            <person name="Danielson P."/>
            <person name="Marra L.E."/>
            <person name="Youson J.H."/>
        </authorList>
    </citation>
    <scope>NUCLEOTIDE SEQUENCE [MRNA]</scope>
    <source>
        <tissue>Pituitary</tissue>
    </source>
</reference>
<organism>
    <name type="scientific">Lepisosteus osseus</name>
    <name type="common">Long-nosed gar</name>
    <name type="synonym">Esox osseus</name>
    <dbReference type="NCBI Taxonomy" id="34771"/>
    <lineage>
        <taxon>Eukaryota</taxon>
        <taxon>Metazoa</taxon>
        <taxon>Chordata</taxon>
        <taxon>Craniata</taxon>
        <taxon>Vertebrata</taxon>
        <taxon>Euteleostomi</taxon>
        <taxon>Actinopterygii</taxon>
        <taxon>Neopterygii</taxon>
        <taxon>Holostei</taxon>
        <taxon>Semionotiformes</taxon>
        <taxon>Lepisosteidae</taxon>
        <taxon>Lepisosteus</taxon>
    </lineage>
</organism>